<sequence length="298" mass="32285">MAIPVTRMMVPHAIPSLRLSHPNPSRVDFLCRCAPSEIQPLRPELSLSVGIHAIPHPDKVEKGGEDAFFVSSYRGGVMAVADGVSGWAEQDVDPSLFSKELMANASRLVDDQEVRYDPGFLIDKAHTATTSRGSATIILAMLEEVGILKIGNVGDCGLKLLREGQIIFATAPQEHYFDCPYQLSSEGSAQTYLDASFSIVEVQKGDVIVMGSDGLFDNVFDHEIVSIVTKHTDVAESSRLLAEVASSHSRDTEFESPYALEARAKGFDVPLWKKVLGKKLTGGKLDDVTVIVAKVVSS</sequence>
<protein>
    <recommendedName>
        <fullName>Probable protein phosphatase 2C 26</fullName>
        <shortName>AtPP2C26</shortName>
        <ecNumber>3.1.3.16</ecNumber>
    </recommendedName>
</protein>
<feature type="chain" id="PRO_0000367955" description="Probable protein phosphatase 2C 26">
    <location>
        <begin position="1"/>
        <end position="298"/>
    </location>
</feature>
<feature type="domain" description="PPM-type phosphatase" evidence="2">
    <location>
        <begin position="48"/>
        <end position="295"/>
    </location>
</feature>
<feature type="binding site" evidence="1">
    <location>
        <position position="82"/>
    </location>
    <ligand>
        <name>Mn(2+)</name>
        <dbReference type="ChEBI" id="CHEBI:29035"/>
        <label>1</label>
    </ligand>
</feature>
<feature type="binding site" evidence="1">
    <location>
        <position position="82"/>
    </location>
    <ligand>
        <name>Mn(2+)</name>
        <dbReference type="ChEBI" id="CHEBI:29035"/>
        <label>2</label>
    </ligand>
</feature>
<feature type="binding site" evidence="1">
    <location>
        <position position="83"/>
    </location>
    <ligand>
        <name>Mn(2+)</name>
        <dbReference type="ChEBI" id="CHEBI:29035"/>
        <label>1</label>
    </ligand>
</feature>
<feature type="binding site" evidence="1">
    <location>
        <position position="213"/>
    </location>
    <ligand>
        <name>Mn(2+)</name>
        <dbReference type="ChEBI" id="CHEBI:29035"/>
        <label>2</label>
    </ligand>
</feature>
<feature type="binding site" evidence="1">
    <location>
        <position position="286"/>
    </location>
    <ligand>
        <name>Mn(2+)</name>
        <dbReference type="ChEBI" id="CHEBI:29035"/>
        <label>2</label>
    </ligand>
</feature>
<feature type="splice variant" id="VSP_036765" description="In isoform 2." evidence="3">
    <location>
        <begin position="1"/>
        <end position="77"/>
    </location>
</feature>
<dbReference type="EC" id="3.1.3.16"/>
<dbReference type="EMBL" id="AC004165">
    <property type="protein sequence ID" value="AAC16955.2"/>
    <property type="molecule type" value="Genomic_DNA"/>
</dbReference>
<dbReference type="EMBL" id="CP002685">
    <property type="protein sequence ID" value="AEC08354.1"/>
    <property type="molecule type" value="Genomic_DNA"/>
</dbReference>
<dbReference type="EMBL" id="CP002685">
    <property type="protein sequence ID" value="ANM61563.1"/>
    <property type="molecule type" value="Genomic_DNA"/>
</dbReference>
<dbReference type="EMBL" id="AF370298">
    <property type="protein sequence ID" value="AAK44113.1"/>
    <property type="molecule type" value="mRNA"/>
</dbReference>
<dbReference type="EMBL" id="AY063046">
    <property type="protein sequence ID" value="AAL34220.1"/>
    <property type="molecule type" value="mRNA"/>
</dbReference>
<dbReference type="PIR" id="T00581">
    <property type="entry name" value="T00581"/>
</dbReference>
<dbReference type="RefSeq" id="NP_001077980.1">
    <molecule id="O64730-2"/>
    <property type="nucleotide sequence ID" value="NM_001084511.3"/>
</dbReference>
<dbReference type="RefSeq" id="NP_565696.1">
    <molecule id="O64730-1"/>
    <property type="nucleotide sequence ID" value="NM_128572.5"/>
</dbReference>
<dbReference type="SMR" id="O64730"/>
<dbReference type="BioGRID" id="2918">
    <property type="interactions" value="1"/>
</dbReference>
<dbReference type="FunCoup" id="O64730">
    <property type="interactions" value="1103"/>
</dbReference>
<dbReference type="IntAct" id="O64730">
    <property type="interactions" value="1"/>
</dbReference>
<dbReference type="MINT" id="O64730"/>
<dbReference type="STRING" id="3702.O64730"/>
<dbReference type="PaxDb" id="3702-AT2G30170.1"/>
<dbReference type="EnsemblPlants" id="AT2G30170.1">
    <molecule id="O64730-1"/>
    <property type="protein sequence ID" value="AT2G30170.1"/>
    <property type="gene ID" value="AT2G30170"/>
</dbReference>
<dbReference type="EnsemblPlants" id="AT2G30170.3">
    <molecule id="O64730-2"/>
    <property type="protein sequence ID" value="AT2G30170.3"/>
    <property type="gene ID" value="AT2G30170"/>
</dbReference>
<dbReference type="GeneID" id="817569"/>
<dbReference type="Gramene" id="AT2G30170.1">
    <molecule id="O64730-1"/>
    <property type="protein sequence ID" value="AT2G30170.1"/>
    <property type="gene ID" value="AT2G30170"/>
</dbReference>
<dbReference type="Gramene" id="AT2G30170.3">
    <molecule id="O64730-2"/>
    <property type="protein sequence ID" value="AT2G30170.3"/>
    <property type="gene ID" value="AT2G30170"/>
</dbReference>
<dbReference type="KEGG" id="ath:AT2G30170"/>
<dbReference type="Araport" id="AT2G30170"/>
<dbReference type="TAIR" id="AT2G30170">
    <property type="gene designation" value="PBCP"/>
</dbReference>
<dbReference type="eggNOG" id="KOG1379">
    <property type="taxonomic scope" value="Eukaryota"/>
</dbReference>
<dbReference type="HOGENOM" id="CLU_029404_3_3_1"/>
<dbReference type="InParanoid" id="O64730"/>
<dbReference type="OMA" id="ANTIAWM"/>
<dbReference type="OrthoDB" id="60843at2759"/>
<dbReference type="PhylomeDB" id="O64730"/>
<dbReference type="PRO" id="PR:O64730"/>
<dbReference type="Proteomes" id="UP000006548">
    <property type="component" value="Chromosome 2"/>
</dbReference>
<dbReference type="ExpressionAtlas" id="O64730">
    <property type="expression patterns" value="baseline and differential"/>
</dbReference>
<dbReference type="GO" id="GO:0009507">
    <property type="term" value="C:chloroplast"/>
    <property type="evidence" value="ECO:0000314"/>
    <property type="project" value="TAIR"/>
</dbReference>
<dbReference type="GO" id="GO:0009570">
    <property type="term" value="C:chloroplast stroma"/>
    <property type="evidence" value="ECO:0007005"/>
    <property type="project" value="TAIR"/>
</dbReference>
<dbReference type="GO" id="GO:0046872">
    <property type="term" value="F:metal ion binding"/>
    <property type="evidence" value="ECO:0007669"/>
    <property type="project" value="UniProtKB-KW"/>
</dbReference>
<dbReference type="GO" id="GO:0004722">
    <property type="term" value="F:protein serine/threonine phosphatase activity"/>
    <property type="evidence" value="ECO:0007669"/>
    <property type="project" value="UniProtKB-EC"/>
</dbReference>
<dbReference type="GO" id="GO:0071482">
    <property type="term" value="P:cellular response to light stimulus"/>
    <property type="evidence" value="ECO:0000315"/>
    <property type="project" value="TAIR"/>
</dbReference>
<dbReference type="GO" id="GO:0035970">
    <property type="term" value="P:peptidyl-threonine dephosphorylation"/>
    <property type="evidence" value="ECO:0000314"/>
    <property type="project" value="TAIR"/>
</dbReference>
<dbReference type="GO" id="GO:0010027">
    <property type="term" value="P:thylakoid membrane organization"/>
    <property type="evidence" value="ECO:0000315"/>
    <property type="project" value="TAIR"/>
</dbReference>
<dbReference type="Gene3D" id="3.60.40.10">
    <property type="entry name" value="PPM-type phosphatase domain"/>
    <property type="match status" value="1"/>
</dbReference>
<dbReference type="InterPro" id="IPR036457">
    <property type="entry name" value="PPM-type-like_dom_sf"/>
</dbReference>
<dbReference type="InterPro" id="IPR001932">
    <property type="entry name" value="PPM-type_phosphatase-like_dom"/>
</dbReference>
<dbReference type="InterPro" id="IPR039123">
    <property type="entry name" value="PPTC7"/>
</dbReference>
<dbReference type="PANTHER" id="PTHR12320">
    <property type="entry name" value="PROTEIN PHOSPHATASE 2C"/>
    <property type="match status" value="1"/>
</dbReference>
<dbReference type="PANTHER" id="PTHR12320:SF60">
    <property type="entry name" value="PROTEIN PHOSPHATASE 2C 26-RELATED"/>
    <property type="match status" value="1"/>
</dbReference>
<dbReference type="SMART" id="SM00331">
    <property type="entry name" value="PP2C_SIG"/>
    <property type="match status" value="1"/>
</dbReference>
<dbReference type="SMART" id="SM00332">
    <property type="entry name" value="PP2Cc"/>
    <property type="match status" value="1"/>
</dbReference>
<dbReference type="SUPFAM" id="SSF81606">
    <property type="entry name" value="PP2C-like"/>
    <property type="match status" value="1"/>
</dbReference>
<dbReference type="PROSITE" id="PS51746">
    <property type="entry name" value="PPM_2"/>
    <property type="match status" value="1"/>
</dbReference>
<organism>
    <name type="scientific">Arabidopsis thaliana</name>
    <name type="common">Mouse-ear cress</name>
    <dbReference type="NCBI Taxonomy" id="3702"/>
    <lineage>
        <taxon>Eukaryota</taxon>
        <taxon>Viridiplantae</taxon>
        <taxon>Streptophyta</taxon>
        <taxon>Embryophyta</taxon>
        <taxon>Tracheophyta</taxon>
        <taxon>Spermatophyta</taxon>
        <taxon>Magnoliopsida</taxon>
        <taxon>eudicotyledons</taxon>
        <taxon>Gunneridae</taxon>
        <taxon>Pentapetalae</taxon>
        <taxon>rosids</taxon>
        <taxon>malvids</taxon>
        <taxon>Brassicales</taxon>
        <taxon>Brassicaceae</taxon>
        <taxon>Camelineae</taxon>
        <taxon>Arabidopsis</taxon>
    </lineage>
</organism>
<name>P2C26_ARATH</name>
<evidence type="ECO:0000250" key="1"/>
<evidence type="ECO:0000255" key="2">
    <source>
        <dbReference type="PROSITE-ProRule" id="PRU01082"/>
    </source>
</evidence>
<evidence type="ECO:0000305" key="3"/>
<keyword id="KW-0025">Alternative splicing</keyword>
<keyword id="KW-0378">Hydrolase</keyword>
<keyword id="KW-0460">Magnesium</keyword>
<keyword id="KW-0464">Manganese</keyword>
<keyword id="KW-0479">Metal-binding</keyword>
<keyword id="KW-0904">Protein phosphatase</keyword>
<keyword id="KW-1185">Reference proteome</keyword>
<proteinExistence type="evidence at transcript level"/>
<gene>
    <name type="ordered locus">At2g30170</name>
    <name type="ORF">T27E13.9</name>
</gene>
<accession>O64730</accession>
<accession>A8MQM8</accession>
<accession>Q94K51</accession>
<reference key="1">
    <citation type="journal article" date="1999" name="Nature">
        <title>Sequence and analysis of chromosome 2 of the plant Arabidopsis thaliana.</title>
        <authorList>
            <person name="Lin X."/>
            <person name="Kaul S."/>
            <person name="Rounsley S.D."/>
            <person name="Shea T.P."/>
            <person name="Benito M.-I."/>
            <person name="Town C.D."/>
            <person name="Fujii C.Y."/>
            <person name="Mason T.M."/>
            <person name="Bowman C.L."/>
            <person name="Barnstead M.E."/>
            <person name="Feldblyum T.V."/>
            <person name="Buell C.R."/>
            <person name="Ketchum K.A."/>
            <person name="Lee J.J."/>
            <person name="Ronning C.M."/>
            <person name="Koo H.L."/>
            <person name="Moffat K.S."/>
            <person name="Cronin L.A."/>
            <person name="Shen M."/>
            <person name="Pai G."/>
            <person name="Van Aken S."/>
            <person name="Umayam L."/>
            <person name="Tallon L.J."/>
            <person name="Gill J.E."/>
            <person name="Adams M.D."/>
            <person name="Carrera A.J."/>
            <person name="Creasy T.H."/>
            <person name="Goodman H.M."/>
            <person name="Somerville C.R."/>
            <person name="Copenhaver G.P."/>
            <person name="Preuss D."/>
            <person name="Nierman W.C."/>
            <person name="White O."/>
            <person name="Eisen J.A."/>
            <person name="Salzberg S.L."/>
            <person name="Fraser C.M."/>
            <person name="Venter J.C."/>
        </authorList>
    </citation>
    <scope>NUCLEOTIDE SEQUENCE [LARGE SCALE GENOMIC DNA]</scope>
    <source>
        <strain>cv. Columbia</strain>
    </source>
</reference>
<reference key="2">
    <citation type="journal article" date="2017" name="Plant J.">
        <title>Araport11: a complete reannotation of the Arabidopsis thaliana reference genome.</title>
        <authorList>
            <person name="Cheng C.Y."/>
            <person name="Krishnakumar V."/>
            <person name="Chan A.P."/>
            <person name="Thibaud-Nissen F."/>
            <person name="Schobel S."/>
            <person name="Town C.D."/>
        </authorList>
    </citation>
    <scope>GENOME REANNOTATION</scope>
    <source>
        <strain>cv. Columbia</strain>
    </source>
</reference>
<reference key="3">
    <citation type="journal article" date="2003" name="Science">
        <title>Empirical analysis of transcriptional activity in the Arabidopsis genome.</title>
        <authorList>
            <person name="Yamada K."/>
            <person name="Lim J."/>
            <person name="Dale J.M."/>
            <person name="Chen H."/>
            <person name="Shinn P."/>
            <person name="Palm C.J."/>
            <person name="Southwick A.M."/>
            <person name="Wu H.C."/>
            <person name="Kim C.J."/>
            <person name="Nguyen M."/>
            <person name="Pham P.K."/>
            <person name="Cheuk R.F."/>
            <person name="Karlin-Newmann G."/>
            <person name="Liu S.X."/>
            <person name="Lam B."/>
            <person name="Sakano H."/>
            <person name="Wu T."/>
            <person name="Yu G."/>
            <person name="Miranda M."/>
            <person name="Quach H.L."/>
            <person name="Tripp M."/>
            <person name="Chang C.H."/>
            <person name="Lee J.M."/>
            <person name="Toriumi M.J."/>
            <person name="Chan M.M."/>
            <person name="Tang C.C."/>
            <person name="Onodera C.S."/>
            <person name="Deng J.M."/>
            <person name="Akiyama K."/>
            <person name="Ansari Y."/>
            <person name="Arakawa T."/>
            <person name="Banh J."/>
            <person name="Banno F."/>
            <person name="Bowser L."/>
            <person name="Brooks S.Y."/>
            <person name="Carninci P."/>
            <person name="Chao Q."/>
            <person name="Choy N."/>
            <person name="Enju A."/>
            <person name="Goldsmith A.D."/>
            <person name="Gurjal M."/>
            <person name="Hansen N.F."/>
            <person name="Hayashizaki Y."/>
            <person name="Johnson-Hopson C."/>
            <person name="Hsuan V.W."/>
            <person name="Iida K."/>
            <person name="Karnes M."/>
            <person name="Khan S."/>
            <person name="Koesema E."/>
            <person name="Ishida J."/>
            <person name="Jiang P.X."/>
            <person name="Jones T."/>
            <person name="Kawai J."/>
            <person name="Kamiya A."/>
            <person name="Meyers C."/>
            <person name="Nakajima M."/>
            <person name="Narusaka M."/>
            <person name="Seki M."/>
            <person name="Sakurai T."/>
            <person name="Satou M."/>
            <person name="Tamse R."/>
            <person name="Vaysberg M."/>
            <person name="Wallender E.K."/>
            <person name="Wong C."/>
            <person name="Yamamura Y."/>
            <person name="Yuan S."/>
            <person name="Shinozaki K."/>
            <person name="Davis R.W."/>
            <person name="Theologis A."/>
            <person name="Ecker J.R."/>
        </authorList>
    </citation>
    <scope>NUCLEOTIDE SEQUENCE [LARGE SCALE MRNA] (ISOFORM 1)</scope>
    <source>
        <strain>cv. Columbia</strain>
    </source>
</reference>
<reference key="4">
    <citation type="journal article" date="2008" name="BMC Genomics">
        <title>Genome-wide and expression analysis of protein phosphatase 2C in rice and Arabidopsis.</title>
        <authorList>
            <person name="Xue T."/>
            <person name="Wang D."/>
            <person name="Zhang S."/>
            <person name="Ehlting J."/>
            <person name="Ni F."/>
            <person name="Jacab S."/>
            <person name="Zheng C."/>
            <person name="Zhong Y."/>
        </authorList>
    </citation>
    <scope>GENE FAMILY</scope>
    <scope>NOMENCLATURE</scope>
</reference>
<comment type="catalytic activity">
    <reaction>
        <text>O-phospho-L-seryl-[protein] + H2O = L-seryl-[protein] + phosphate</text>
        <dbReference type="Rhea" id="RHEA:20629"/>
        <dbReference type="Rhea" id="RHEA-COMP:9863"/>
        <dbReference type="Rhea" id="RHEA-COMP:11604"/>
        <dbReference type="ChEBI" id="CHEBI:15377"/>
        <dbReference type="ChEBI" id="CHEBI:29999"/>
        <dbReference type="ChEBI" id="CHEBI:43474"/>
        <dbReference type="ChEBI" id="CHEBI:83421"/>
        <dbReference type="EC" id="3.1.3.16"/>
    </reaction>
</comment>
<comment type="catalytic activity">
    <reaction>
        <text>O-phospho-L-threonyl-[protein] + H2O = L-threonyl-[protein] + phosphate</text>
        <dbReference type="Rhea" id="RHEA:47004"/>
        <dbReference type="Rhea" id="RHEA-COMP:11060"/>
        <dbReference type="Rhea" id="RHEA-COMP:11605"/>
        <dbReference type="ChEBI" id="CHEBI:15377"/>
        <dbReference type="ChEBI" id="CHEBI:30013"/>
        <dbReference type="ChEBI" id="CHEBI:43474"/>
        <dbReference type="ChEBI" id="CHEBI:61977"/>
        <dbReference type="EC" id="3.1.3.16"/>
    </reaction>
</comment>
<comment type="cofactor">
    <cofactor evidence="1">
        <name>Mg(2+)</name>
        <dbReference type="ChEBI" id="CHEBI:18420"/>
    </cofactor>
    <cofactor evidence="1">
        <name>Mn(2+)</name>
        <dbReference type="ChEBI" id="CHEBI:29035"/>
    </cofactor>
    <text evidence="1">Binds 2 magnesium or manganese ions per subunit.</text>
</comment>
<comment type="alternative products">
    <event type="alternative splicing"/>
    <isoform>
        <id>O64730-1</id>
        <name>1</name>
        <sequence type="displayed"/>
    </isoform>
    <isoform>
        <id>O64730-2</id>
        <name>2</name>
        <sequence type="described" ref="VSP_036765"/>
    </isoform>
</comment>
<comment type="similarity">
    <text evidence="3">Belongs to the PP2C family.</text>
</comment>